<evidence type="ECO:0000255" key="1">
    <source>
        <dbReference type="HAMAP-Rule" id="MF_01701"/>
    </source>
</evidence>
<sequence length="357" mass="40397">MSIVIQNVSKSFGSFQALADINLSIETGELVALLGPSGSGKTSLLRIIAGLEAADQGDIYFHKDKVTQTHAASRQVGFVFQHYALFPHMTVADNISYGLRVKPRKERPSKKEIAEKVRELLALVKLEGMDDRYPAQLSGGQRQRIALARALAVEPKVLLLDEPFGALDAKVRKDLRKWLRKLHNEFQVTSVFVTHDQEEALDVSDRVVVMNQGKIEQVGSPDEVYEQPKSPFVYDFLGNVNVFTGRVKQGFVQLDKHQLKTPTISKDIHDQEAVVYTRPHHMEISRKKQKDAIPAVIEHIHMVGPIAFLELNWKDDEEVLQVELAKDRFHELDLKKGETVFVVPKNLTLFFPEEFTI</sequence>
<organism>
    <name type="scientific">Halalkalibacterium halodurans (strain ATCC BAA-125 / DSM 18197 / FERM 7344 / JCM 9153 / C-125)</name>
    <name type="common">Bacillus halodurans</name>
    <dbReference type="NCBI Taxonomy" id="272558"/>
    <lineage>
        <taxon>Bacteria</taxon>
        <taxon>Bacillati</taxon>
        <taxon>Bacillota</taxon>
        <taxon>Bacilli</taxon>
        <taxon>Bacillales</taxon>
        <taxon>Bacillaceae</taxon>
        <taxon>Halalkalibacterium (ex Joshi et al. 2022)</taxon>
    </lineage>
</organism>
<gene>
    <name evidence="1" type="primary">cysA</name>
    <name type="ordered locus">BH3130</name>
</gene>
<protein>
    <recommendedName>
        <fullName evidence="1">Sulfate/thiosulfate import ATP-binding protein CysA</fullName>
        <ecNumber evidence="1">7.3.2.3</ecNumber>
    </recommendedName>
    <alternativeName>
        <fullName evidence="1">Sulfate-transporting ATPase</fullName>
    </alternativeName>
</protein>
<proteinExistence type="inferred from homology"/>
<name>CYSA_HALH5</name>
<feature type="chain" id="PRO_0000092252" description="Sulfate/thiosulfate import ATP-binding protein CysA">
    <location>
        <begin position="1"/>
        <end position="357"/>
    </location>
</feature>
<feature type="domain" description="ABC transporter" evidence="1">
    <location>
        <begin position="3"/>
        <end position="237"/>
    </location>
</feature>
<feature type="binding site" evidence="1">
    <location>
        <begin position="35"/>
        <end position="42"/>
    </location>
    <ligand>
        <name>ATP</name>
        <dbReference type="ChEBI" id="CHEBI:30616"/>
    </ligand>
</feature>
<dbReference type="EC" id="7.3.2.3" evidence="1"/>
<dbReference type="EMBL" id="BA000004">
    <property type="protein sequence ID" value="BAB06849.1"/>
    <property type="molecule type" value="Genomic_DNA"/>
</dbReference>
<dbReference type="PIR" id="B84041">
    <property type="entry name" value="B84041"/>
</dbReference>
<dbReference type="RefSeq" id="WP_010899274.1">
    <property type="nucleotide sequence ID" value="NC_002570.2"/>
</dbReference>
<dbReference type="SMR" id="Q9K876"/>
<dbReference type="STRING" id="272558.gene:10729042"/>
<dbReference type="KEGG" id="bha:BH3130"/>
<dbReference type="eggNOG" id="COG1118">
    <property type="taxonomic scope" value="Bacteria"/>
</dbReference>
<dbReference type="HOGENOM" id="CLU_000604_1_1_9"/>
<dbReference type="OrthoDB" id="9802264at2"/>
<dbReference type="Proteomes" id="UP000001258">
    <property type="component" value="Chromosome"/>
</dbReference>
<dbReference type="GO" id="GO:0043190">
    <property type="term" value="C:ATP-binding cassette (ABC) transporter complex"/>
    <property type="evidence" value="ECO:0007669"/>
    <property type="project" value="InterPro"/>
</dbReference>
<dbReference type="GO" id="GO:0015419">
    <property type="term" value="F:ABC-type sulfate transporter activity"/>
    <property type="evidence" value="ECO:0007669"/>
    <property type="project" value="InterPro"/>
</dbReference>
<dbReference type="GO" id="GO:0102025">
    <property type="term" value="F:ABC-type thiosulfate transporter activity"/>
    <property type="evidence" value="ECO:0007669"/>
    <property type="project" value="RHEA"/>
</dbReference>
<dbReference type="GO" id="GO:0005524">
    <property type="term" value="F:ATP binding"/>
    <property type="evidence" value="ECO:0007669"/>
    <property type="project" value="UniProtKB-KW"/>
</dbReference>
<dbReference type="GO" id="GO:0016887">
    <property type="term" value="F:ATP hydrolysis activity"/>
    <property type="evidence" value="ECO:0007669"/>
    <property type="project" value="InterPro"/>
</dbReference>
<dbReference type="CDD" id="cd03296">
    <property type="entry name" value="ABC_CysA_sulfate_importer"/>
    <property type="match status" value="1"/>
</dbReference>
<dbReference type="FunFam" id="3.40.50.300:FF:000227">
    <property type="entry name" value="Sulfate/thiosulfate import ATP-binding protein CysA"/>
    <property type="match status" value="1"/>
</dbReference>
<dbReference type="Gene3D" id="2.40.50.100">
    <property type="match status" value="1"/>
</dbReference>
<dbReference type="Gene3D" id="2.40.50.140">
    <property type="entry name" value="Nucleic acid-binding proteins"/>
    <property type="match status" value="1"/>
</dbReference>
<dbReference type="Gene3D" id="3.40.50.300">
    <property type="entry name" value="P-loop containing nucleotide triphosphate hydrolases"/>
    <property type="match status" value="1"/>
</dbReference>
<dbReference type="InterPro" id="IPR003593">
    <property type="entry name" value="AAA+_ATPase"/>
</dbReference>
<dbReference type="InterPro" id="IPR050093">
    <property type="entry name" value="ABC_SmlMolc_Importer"/>
</dbReference>
<dbReference type="InterPro" id="IPR003439">
    <property type="entry name" value="ABC_transporter-like_ATP-bd"/>
</dbReference>
<dbReference type="InterPro" id="IPR017871">
    <property type="entry name" value="ABC_transporter-like_CS"/>
</dbReference>
<dbReference type="InterPro" id="IPR041193">
    <property type="entry name" value="CysA_C"/>
</dbReference>
<dbReference type="InterPro" id="IPR008995">
    <property type="entry name" value="Mo/tungstate-bd_C_term_dom"/>
</dbReference>
<dbReference type="InterPro" id="IPR012340">
    <property type="entry name" value="NA-bd_OB-fold"/>
</dbReference>
<dbReference type="InterPro" id="IPR027417">
    <property type="entry name" value="P-loop_NTPase"/>
</dbReference>
<dbReference type="InterPro" id="IPR005666">
    <property type="entry name" value="Sulph_transpt1"/>
</dbReference>
<dbReference type="InterPro" id="IPR024765">
    <property type="entry name" value="TOBE-like"/>
</dbReference>
<dbReference type="NCBIfam" id="TIGR00968">
    <property type="entry name" value="3a0106s01"/>
    <property type="match status" value="1"/>
</dbReference>
<dbReference type="PANTHER" id="PTHR42781">
    <property type="entry name" value="SPERMIDINE/PUTRESCINE IMPORT ATP-BINDING PROTEIN POTA"/>
    <property type="match status" value="1"/>
</dbReference>
<dbReference type="PANTHER" id="PTHR42781:SF4">
    <property type="entry name" value="SPERMIDINE_PUTRESCINE IMPORT ATP-BINDING PROTEIN POTA"/>
    <property type="match status" value="1"/>
</dbReference>
<dbReference type="Pfam" id="PF00005">
    <property type="entry name" value="ABC_tran"/>
    <property type="match status" value="1"/>
</dbReference>
<dbReference type="Pfam" id="PF17850">
    <property type="entry name" value="CysA_C_terminal"/>
    <property type="match status" value="1"/>
</dbReference>
<dbReference type="Pfam" id="PF12857">
    <property type="entry name" value="TOBE_3"/>
    <property type="match status" value="1"/>
</dbReference>
<dbReference type="SMART" id="SM00382">
    <property type="entry name" value="AAA"/>
    <property type="match status" value="1"/>
</dbReference>
<dbReference type="SUPFAM" id="SSF50331">
    <property type="entry name" value="MOP-like"/>
    <property type="match status" value="1"/>
</dbReference>
<dbReference type="SUPFAM" id="SSF52540">
    <property type="entry name" value="P-loop containing nucleoside triphosphate hydrolases"/>
    <property type="match status" value="1"/>
</dbReference>
<dbReference type="PROSITE" id="PS00211">
    <property type="entry name" value="ABC_TRANSPORTER_1"/>
    <property type="match status" value="1"/>
</dbReference>
<dbReference type="PROSITE" id="PS50893">
    <property type="entry name" value="ABC_TRANSPORTER_2"/>
    <property type="match status" value="1"/>
</dbReference>
<dbReference type="PROSITE" id="PS51237">
    <property type="entry name" value="CYSA"/>
    <property type="match status" value="1"/>
</dbReference>
<accession>Q9K876</accession>
<reference key="1">
    <citation type="journal article" date="2000" name="Nucleic Acids Res.">
        <title>Complete genome sequence of the alkaliphilic bacterium Bacillus halodurans and genomic sequence comparison with Bacillus subtilis.</title>
        <authorList>
            <person name="Takami H."/>
            <person name="Nakasone K."/>
            <person name="Takaki Y."/>
            <person name="Maeno G."/>
            <person name="Sasaki R."/>
            <person name="Masui N."/>
            <person name="Fuji F."/>
            <person name="Hirama C."/>
            <person name="Nakamura Y."/>
            <person name="Ogasawara N."/>
            <person name="Kuhara S."/>
            <person name="Horikoshi K."/>
        </authorList>
    </citation>
    <scope>NUCLEOTIDE SEQUENCE [LARGE SCALE GENOMIC DNA]</scope>
    <source>
        <strain>ATCC BAA-125 / DSM 18197 / FERM 7344 / JCM 9153 / C-125</strain>
    </source>
</reference>
<keyword id="KW-0067">ATP-binding</keyword>
<keyword id="KW-1003">Cell membrane</keyword>
<keyword id="KW-0472">Membrane</keyword>
<keyword id="KW-0547">Nucleotide-binding</keyword>
<keyword id="KW-1185">Reference proteome</keyword>
<keyword id="KW-0764">Sulfate transport</keyword>
<keyword id="KW-1278">Translocase</keyword>
<keyword id="KW-0813">Transport</keyword>
<comment type="function">
    <text evidence="1">Part of the ABC transporter complex CysAWTP involved in sulfate/thiosulfate import. Responsible for energy coupling to the transport system.</text>
</comment>
<comment type="catalytic activity">
    <reaction evidence="1">
        <text>sulfate(out) + ATP + H2O = sulfate(in) + ADP + phosphate + H(+)</text>
        <dbReference type="Rhea" id="RHEA:10192"/>
        <dbReference type="ChEBI" id="CHEBI:15377"/>
        <dbReference type="ChEBI" id="CHEBI:15378"/>
        <dbReference type="ChEBI" id="CHEBI:16189"/>
        <dbReference type="ChEBI" id="CHEBI:30616"/>
        <dbReference type="ChEBI" id="CHEBI:43474"/>
        <dbReference type="ChEBI" id="CHEBI:456216"/>
        <dbReference type="EC" id="7.3.2.3"/>
    </reaction>
</comment>
<comment type="catalytic activity">
    <reaction evidence="1">
        <text>thiosulfate(out) + ATP + H2O = thiosulfate(in) + ADP + phosphate + H(+)</text>
        <dbReference type="Rhea" id="RHEA:29871"/>
        <dbReference type="ChEBI" id="CHEBI:15377"/>
        <dbReference type="ChEBI" id="CHEBI:15378"/>
        <dbReference type="ChEBI" id="CHEBI:30616"/>
        <dbReference type="ChEBI" id="CHEBI:33542"/>
        <dbReference type="ChEBI" id="CHEBI:43474"/>
        <dbReference type="ChEBI" id="CHEBI:456216"/>
        <dbReference type="EC" id="7.3.2.3"/>
    </reaction>
</comment>
<comment type="subunit">
    <text evidence="1">The complex is composed of two ATP-binding proteins (CysA), two transmembrane proteins (CysT and CysW) and a solute-binding protein (CysP).</text>
</comment>
<comment type="subcellular location">
    <subcellularLocation>
        <location evidence="1">Cell membrane</location>
        <topology evidence="1">Peripheral membrane protein</topology>
    </subcellularLocation>
</comment>
<comment type="similarity">
    <text evidence="1">Belongs to the ABC transporter superfamily. Sulfate/tungstate importer (TC 3.A.1.6) family.</text>
</comment>